<keyword id="KW-0414">Isoprene biosynthesis</keyword>
<keyword id="KW-0464">Manganese</keyword>
<keyword id="KW-0479">Metal-binding</keyword>
<keyword id="KW-0521">NADP</keyword>
<keyword id="KW-0560">Oxidoreductase</keyword>
<reference key="1">
    <citation type="journal article" date="2005" name="J. Bacteriol.">
        <title>Genomic sequence of an otitis media isolate of nontypeable Haemophilus influenzae: comparative study with H. influenzae serotype d, strain KW20.</title>
        <authorList>
            <person name="Harrison A."/>
            <person name="Dyer D.W."/>
            <person name="Gillaspy A."/>
            <person name="Ray W.C."/>
            <person name="Mungur R."/>
            <person name="Carson M.B."/>
            <person name="Zhong H."/>
            <person name="Gipson J."/>
            <person name="Gipson M."/>
            <person name="Johnson L.S."/>
            <person name="Lewis L."/>
            <person name="Bakaletz L.O."/>
            <person name="Munson R.S. Jr."/>
        </authorList>
    </citation>
    <scope>NUCLEOTIDE SEQUENCE [LARGE SCALE GENOMIC DNA]</scope>
    <source>
        <strain>86-028NP</strain>
    </source>
</reference>
<proteinExistence type="inferred from homology"/>
<comment type="function">
    <text evidence="1">Catalyzes the NADPH-dependent rearrangement and reduction of 1-deoxy-D-xylulose-5-phosphate (DXP) to 2-C-methyl-D-erythritol 4-phosphate (MEP).</text>
</comment>
<comment type="catalytic activity">
    <reaction evidence="1">
        <text>2-C-methyl-D-erythritol 4-phosphate + NADP(+) = 1-deoxy-D-xylulose 5-phosphate + NADPH + H(+)</text>
        <dbReference type="Rhea" id="RHEA:13717"/>
        <dbReference type="ChEBI" id="CHEBI:15378"/>
        <dbReference type="ChEBI" id="CHEBI:57783"/>
        <dbReference type="ChEBI" id="CHEBI:57792"/>
        <dbReference type="ChEBI" id="CHEBI:58262"/>
        <dbReference type="ChEBI" id="CHEBI:58349"/>
        <dbReference type="EC" id="1.1.1.267"/>
    </reaction>
    <physiologicalReaction direction="right-to-left" evidence="1">
        <dbReference type="Rhea" id="RHEA:13719"/>
    </physiologicalReaction>
</comment>
<comment type="cofactor">
    <cofactor evidence="1">
        <name>Mg(2+)</name>
        <dbReference type="ChEBI" id="CHEBI:18420"/>
    </cofactor>
    <cofactor evidence="1">
        <name>Mn(2+)</name>
        <dbReference type="ChEBI" id="CHEBI:29035"/>
    </cofactor>
</comment>
<comment type="pathway">
    <text evidence="1">Isoprenoid biosynthesis; isopentenyl diphosphate biosynthesis via DXP pathway; isopentenyl diphosphate from 1-deoxy-D-xylulose 5-phosphate: step 1/6.</text>
</comment>
<comment type="similarity">
    <text evidence="1">Belongs to the DXR family.</text>
</comment>
<sequence>MQKQNIVILGSTGSIGKSTLSVIENNPQKYHAFALVGGKNVEAMFEQCIKFRPHFAALDDVNAAKILREKLIAHHIPTKVLAGRRAICELAAHPDADQIMASIVGAAGLLPTLSAVKAGKRVLLANKESLVTCGQLFIDAVKNYGSKLLPVDSEHNAIFQSLPPEAQEKIGFCPLSELGVSKIILTGSGGPFRYTPLEQFTNITPEQAVAHPNWSMGKKISVDSATMMNKGLEYIEARWLFNASAEEMEVIIHPQSIIHSMVRYVDGSVIAQMGNPDMRTPIAETMAYPHRTFAGVEPLDFFKIKELTFIEPDFNRYPNLKLAIDAFAAGQYATTAMNAANEIAVQAFLDRQISFMDIAKINSKTIERISPYTIQNIDDVLEIDAQAREIAKTLIRE</sequence>
<dbReference type="EC" id="1.1.1.267" evidence="1"/>
<dbReference type="EMBL" id="CP000057">
    <property type="protein sequence ID" value="AAX87854.1"/>
    <property type="molecule type" value="Genomic_DNA"/>
</dbReference>
<dbReference type="RefSeq" id="WP_011272222.1">
    <property type="nucleotide sequence ID" value="NC_007146.2"/>
</dbReference>
<dbReference type="SMR" id="Q4QM93"/>
<dbReference type="GeneID" id="93219848"/>
<dbReference type="KEGG" id="hit:NTHI0971"/>
<dbReference type="HOGENOM" id="CLU_035714_4_0_6"/>
<dbReference type="UniPathway" id="UPA00056">
    <property type="reaction ID" value="UER00092"/>
</dbReference>
<dbReference type="Proteomes" id="UP000002525">
    <property type="component" value="Chromosome"/>
</dbReference>
<dbReference type="GO" id="GO:0030604">
    <property type="term" value="F:1-deoxy-D-xylulose-5-phosphate reductoisomerase activity"/>
    <property type="evidence" value="ECO:0007669"/>
    <property type="project" value="UniProtKB-UniRule"/>
</dbReference>
<dbReference type="GO" id="GO:0030145">
    <property type="term" value="F:manganese ion binding"/>
    <property type="evidence" value="ECO:0007669"/>
    <property type="project" value="TreeGrafter"/>
</dbReference>
<dbReference type="GO" id="GO:0070402">
    <property type="term" value="F:NADPH binding"/>
    <property type="evidence" value="ECO:0007669"/>
    <property type="project" value="InterPro"/>
</dbReference>
<dbReference type="GO" id="GO:0051484">
    <property type="term" value="P:isopentenyl diphosphate biosynthetic process, methylerythritol 4-phosphate pathway involved in terpenoid biosynthetic process"/>
    <property type="evidence" value="ECO:0007669"/>
    <property type="project" value="TreeGrafter"/>
</dbReference>
<dbReference type="FunFam" id="1.10.1740.10:FF:000004">
    <property type="entry name" value="1-deoxy-D-xylulose 5-phosphate reductoisomerase"/>
    <property type="match status" value="1"/>
</dbReference>
<dbReference type="FunFam" id="3.40.50.720:FF:000045">
    <property type="entry name" value="1-deoxy-D-xylulose 5-phosphate reductoisomerase"/>
    <property type="match status" value="1"/>
</dbReference>
<dbReference type="Gene3D" id="1.10.1740.10">
    <property type="match status" value="1"/>
</dbReference>
<dbReference type="Gene3D" id="3.40.50.720">
    <property type="entry name" value="NAD(P)-binding Rossmann-like Domain"/>
    <property type="match status" value="1"/>
</dbReference>
<dbReference type="HAMAP" id="MF_00183">
    <property type="entry name" value="DXP_reductoisom"/>
    <property type="match status" value="1"/>
</dbReference>
<dbReference type="InterPro" id="IPR003821">
    <property type="entry name" value="DXP_reductoisomerase"/>
</dbReference>
<dbReference type="InterPro" id="IPR013644">
    <property type="entry name" value="DXP_reductoisomerase_C"/>
</dbReference>
<dbReference type="InterPro" id="IPR013512">
    <property type="entry name" value="DXP_reductoisomerase_N"/>
</dbReference>
<dbReference type="InterPro" id="IPR026877">
    <property type="entry name" value="DXPR_C"/>
</dbReference>
<dbReference type="InterPro" id="IPR036169">
    <property type="entry name" value="DXPR_C_sf"/>
</dbReference>
<dbReference type="InterPro" id="IPR036291">
    <property type="entry name" value="NAD(P)-bd_dom_sf"/>
</dbReference>
<dbReference type="NCBIfam" id="TIGR00243">
    <property type="entry name" value="Dxr"/>
    <property type="match status" value="1"/>
</dbReference>
<dbReference type="NCBIfam" id="NF003938">
    <property type="entry name" value="PRK05447.1-1"/>
    <property type="match status" value="1"/>
</dbReference>
<dbReference type="NCBIfam" id="NF009114">
    <property type="entry name" value="PRK12464.1"/>
    <property type="match status" value="1"/>
</dbReference>
<dbReference type="PANTHER" id="PTHR30525">
    <property type="entry name" value="1-DEOXY-D-XYLULOSE 5-PHOSPHATE REDUCTOISOMERASE"/>
    <property type="match status" value="1"/>
</dbReference>
<dbReference type="PANTHER" id="PTHR30525:SF0">
    <property type="entry name" value="1-DEOXY-D-XYLULOSE 5-PHOSPHATE REDUCTOISOMERASE, CHLOROPLASTIC"/>
    <property type="match status" value="1"/>
</dbReference>
<dbReference type="Pfam" id="PF08436">
    <property type="entry name" value="DXP_redisom_C"/>
    <property type="match status" value="1"/>
</dbReference>
<dbReference type="Pfam" id="PF02670">
    <property type="entry name" value="DXP_reductoisom"/>
    <property type="match status" value="1"/>
</dbReference>
<dbReference type="Pfam" id="PF13288">
    <property type="entry name" value="DXPR_C"/>
    <property type="match status" value="1"/>
</dbReference>
<dbReference type="PIRSF" id="PIRSF006205">
    <property type="entry name" value="Dxp_reductismrs"/>
    <property type="match status" value="1"/>
</dbReference>
<dbReference type="SUPFAM" id="SSF69055">
    <property type="entry name" value="1-deoxy-D-xylulose-5-phosphate reductoisomerase, C-terminal domain"/>
    <property type="match status" value="1"/>
</dbReference>
<dbReference type="SUPFAM" id="SSF55347">
    <property type="entry name" value="Glyceraldehyde-3-phosphate dehydrogenase-like, C-terminal domain"/>
    <property type="match status" value="1"/>
</dbReference>
<dbReference type="SUPFAM" id="SSF51735">
    <property type="entry name" value="NAD(P)-binding Rossmann-fold domains"/>
    <property type="match status" value="1"/>
</dbReference>
<organism>
    <name type="scientific">Haemophilus influenzae (strain 86-028NP)</name>
    <dbReference type="NCBI Taxonomy" id="281310"/>
    <lineage>
        <taxon>Bacteria</taxon>
        <taxon>Pseudomonadati</taxon>
        <taxon>Pseudomonadota</taxon>
        <taxon>Gammaproteobacteria</taxon>
        <taxon>Pasteurellales</taxon>
        <taxon>Pasteurellaceae</taxon>
        <taxon>Haemophilus</taxon>
    </lineage>
</organism>
<feature type="chain" id="PRO_0000163661" description="1-deoxy-D-xylulose 5-phosphate reductoisomerase">
    <location>
        <begin position="1"/>
        <end position="397"/>
    </location>
</feature>
<feature type="binding site" evidence="1">
    <location>
        <position position="12"/>
    </location>
    <ligand>
        <name>NADPH</name>
        <dbReference type="ChEBI" id="CHEBI:57783"/>
    </ligand>
</feature>
<feature type="binding site" evidence="1">
    <location>
        <position position="13"/>
    </location>
    <ligand>
        <name>NADPH</name>
        <dbReference type="ChEBI" id="CHEBI:57783"/>
    </ligand>
</feature>
<feature type="binding site" evidence="1">
    <location>
        <position position="14"/>
    </location>
    <ligand>
        <name>NADPH</name>
        <dbReference type="ChEBI" id="CHEBI:57783"/>
    </ligand>
</feature>
<feature type="binding site" evidence="1">
    <location>
        <position position="15"/>
    </location>
    <ligand>
        <name>NADPH</name>
        <dbReference type="ChEBI" id="CHEBI:57783"/>
    </ligand>
</feature>
<feature type="binding site" evidence="1">
    <location>
        <position position="38"/>
    </location>
    <ligand>
        <name>NADPH</name>
        <dbReference type="ChEBI" id="CHEBI:57783"/>
    </ligand>
</feature>
<feature type="binding site" evidence="1">
    <location>
        <position position="39"/>
    </location>
    <ligand>
        <name>NADPH</name>
        <dbReference type="ChEBI" id="CHEBI:57783"/>
    </ligand>
</feature>
<feature type="binding site" evidence="1">
    <location>
        <position position="40"/>
    </location>
    <ligand>
        <name>NADPH</name>
        <dbReference type="ChEBI" id="CHEBI:57783"/>
    </ligand>
</feature>
<feature type="binding site" evidence="1">
    <location>
        <position position="126"/>
    </location>
    <ligand>
        <name>NADPH</name>
        <dbReference type="ChEBI" id="CHEBI:57783"/>
    </ligand>
</feature>
<feature type="binding site" evidence="1">
    <location>
        <position position="127"/>
    </location>
    <ligand>
        <name>1-deoxy-D-xylulose 5-phosphate</name>
        <dbReference type="ChEBI" id="CHEBI:57792"/>
    </ligand>
</feature>
<feature type="binding site" evidence="1">
    <location>
        <position position="128"/>
    </location>
    <ligand>
        <name>NADPH</name>
        <dbReference type="ChEBI" id="CHEBI:57783"/>
    </ligand>
</feature>
<feature type="binding site" evidence="1">
    <location>
        <position position="152"/>
    </location>
    <ligand>
        <name>Mn(2+)</name>
        <dbReference type="ChEBI" id="CHEBI:29035"/>
    </ligand>
</feature>
<feature type="binding site" evidence="1">
    <location>
        <position position="153"/>
    </location>
    <ligand>
        <name>1-deoxy-D-xylulose 5-phosphate</name>
        <dbReference type="ChEBI" id="CHEBI:57792"/>
    </ligand>
</feature>
<feature type="binding site" evidence="1">
    <location>
        <position position="154"/>
    </location>
    <ligand>
        <name>1-deoxy-D-xylulose 5-phosphate</name>
        <dbReference type="ChEBI" id="CHEBI:57792"/>
    </ligand>
</feature>
<feature type="binding site" evidence="1">
    <location>
        <position position="154"/>
    </location>
    <ligand>
        <name>Mn(2+)</name>
        <dbReference type="ChEBI" id="CHEBI:29035"/>
    </ligand>
</feature>
<feature type="binding site" evidence="1">
    <location>
        <position position="188"/>
    </location>
    <ligand>
        <name>1-deoxy-D-xylulose 5-phosphate</name>
        <dbReference type="ChEBI" id="CHEBI:57792"/>
    </ligand>
</feature>
<feature type="binding site" evidence="1">
    <location>
        <position position="211"/>
    </location>
    <ligand>
        <name>1-deoxy-D-xylulose 5-phosphate</name>
        <dbReference type="ChEBI" id="CHEBI:57792"/>
    </ligand>
</feature>
<feature type="binding site" evidence="1">
    <location>
        <position position="217"/>
    </location>
    <ligand>
        <name>NADPH</name>
        <dbReference type="ChEBI" id="CHEBI:57783"/>
    </ligand>
</feature>
<feature type="binding site" evidence="1">
    <location>
        <position position="224"/>
    </location>
    <ligand>
        <name>1-deoxy-D-xylulose 5-phosphate</name>
        <dbReference type="ChEBI" id="CHEBI:57792"/>
    </ligand>
</feature>
<feature type="binding site" evidence="1">
    <location>
        <position position="229"/>
    </location>
    <ligand>
        <name>1-deoxy-D-xylulose 5-phosphate</name>
        <dbReference type="ChEBI" id="CHEBI:57792"/>
    </ligand>
</feature>
<feature type="binding site" evidence="1">
    <location>
        <position position="230"/>
    </location>
    <ligand>
        <name>1-deoxy-D-xylulose 5-phosphate</name>
        <dbReference type="ChEBI" id="CHEBI:57792"/>
    </ligand>
</feature>
<feature type="binding site" evidence="1">
    <location>
        <position position="233"/>
    </location>
    <ligand>
        <name>1-deoxy-D-xylulose 5-phosphate</name>
        <dbReference type="ChEBI" id="CHEBI:57792"/>
    </ligand>
</feature>
<feature type="binding site" evidence="1">
    <location>
        <position position="233"/>
    </location>
    <ligand>
        <name>Mn(2+)</name>
        <dbReference type="ChEBI" id="CHEBI:29035"/>
    </ligand>
</feature>
<evidence type="ECO:0000255" key="1">
    <source>
        <dbReference type="HAMAP-Rule" id="MF_00183"/>
    </source>
</evidence>
<protein>
    <recommendedName>
        <fullName evidence="1">1-deoxy-D-xylulose 5-phosphate reductoisomerase</fullName>
        <shortName evidence="1">DXP reductoisomerase</shortName>
        <ecNumber evidence="1">1.1.1.267</ecNumber>
    </recommendedName>
    <alternativeName>
        <fullName evidence="1">1-deoxyxylulose-5-phosphate reductoisomerase</fullName>
    </alternativeName>
    <alternativeName>
        <fullName evidence="1">2-C-methyl-D-erythritol 4-phosphate synthase</fullName>
    </alternativeName>
</protein>
<name>DXR_HAEI8</name>
<accession>Q4QM93</accession>
<gene>
    <name evidence="1" type="primary">dxr</name>
    <name type="ordered locus">NTHI0971</name>
</gene>